<sequence>MSLLTEVETYVLSIIPSGPLKAEIAQRLEDVFAGKNTDLEALMEWLKTRPILSPLTKGILGFVFTLTVPSERGLQRRRFVQNALNGNGDPNNMDRAVKLYKKLKREITFHGAKEVALSYSTGALASCMGLIYNRMGTVTTEGAFGLVCATCEQIADSQHRSHRQMATTTNPLIRHENRMVLASTTAKAMEQMAGSSEQAAEAMEVANQARQMVQAMRTIGTHPNSSAGLRDNLLENLQAYQKRMGVQMQRFK</sequence>
<accession>Q80A04</accession>
<proteinExistence type="inferred from homology"/>
<gene>
    <name evidence="1" type="primary">M</name>
</gene>
<comment type="function">
    <text evidence="1">Plays critical roles in virus replication, from virus entry and uncoating to assembly and budding of the virus particle. M1 binding to ribonucleocapsids (RNPs) in nucleus seems to inhibit viral transcription. Interaction of viral NEP with M1-RNP is thought to promote nuclear export of the complex, which is targeted to the virion assembly site at the apical plasma membrane in polarized epithelial cells. Interactions with NA and HA may bring M1, a non-raft-associated protein, into lipid rafts. Forms a continuous shell on the inner side of the lipid bilayer in virion, where it binds the RNP. During virus entry into cell, the M2 ion channel acidifies the internal virion core, inducing M1 dissociation from the RNP. M1-free RNPs are transported to the nucleus, where viral transcription and replication can take place.</text>
</comment>
<comment type="function">
    <text evidence="1">Determines the virion's shape: spherical or filamentous. Clinical isolates of influenza are characterized by the presence of significant proportion of filamentous virions, whereas after multiple passage on eggs or cell culture, virions have only spherical morphology. Filamentous virions are thought to be important to infect neighboring cells, and spherical virions more suited to spread through aerosol between hosts organisms.</text>
</comment>
<comment type="subunit">
    <text evidence="1">Homodimer and homomultimer. Interacts with NEP. Binds ribonucleocapsid by both interacting with genomic RNA and NP protein. May interact with HA and NA. Cannot bind NP without genomic RNA.</text>
</comment>
<comment type="subcellular location">
    <subcellularLocation>
        <location evidence="1">Virion membrane</location>
        <topology evidence="1">Peripheral membrane protein</topology>
        <orientation evidence="1">Cytoplasmic side</orientation>
    </subcellularLocation>
    <subcellularLocation>
        <location evidence="1">Host nucleus</location>
    </subcellularLocation>
</comment>
<comment type="alternative products">
    <event type="alternative splicing"/>
    <isoform>
        <id>Q80A04-1</id>
        <name>M1</name>
        <sequence type="displayed"/>
    </isoform>
    <isoform>
        <id>P0C5T2-1</id>
        <name>M2</name>
        <sequence type="external"/>
    </isoform>
    <text>Only the first 9 residues are shared by the 2 isoforms.</text>
</comment>
<comment type="miscellaneous">
    <text evidence="1">Most abundant protein in virion. When expressed alone can form virus-like particles in transfected cells.</text>
</comment>
<comment type="similarity">
    <text evidence="1">Belongs to the influenza viruses Matrix protein M1 family.</text>
</comment>
<dbReference type="EMBL" id="AF509043">
    <property type="protein sequence ID" value="AAO52886.1"/>
    <property type="molecule type" value="Genomic_DNA"/>
</dbReference>
<dbReference type="SMR" id="Q80A04"/>
<dbReference type="GO" id="GO:0042025">
    <property type="term" value="C:host cell nucleus"/>
    <property type="evidence" value="ECO:0007669"/>
    <property type="project" value="UniProtKB-SubCell"/>
</dbReference>
<dbReference type="GO" id="GO:0016020">
    <property type="term" value="C:membrane"/>
    <property type="evidence" value="ECO:0007669"/>
    <property type="project" value="UniProtKB-KW"/>
</dbReference>
<dbReference type="GO" id="GO:0055036">
    <property type="term" value="C:virion membrane"/>
    <property type="evidence" value="ECO:0007669"/>
    <property type="project" value="UniProtKB-SubCell"/>
</dbReference>
<dbReference type="GO" id="GO:0003723">
    <property type="term" value="F:RNA binding"/>
    <property type="evidence" value="ECO:0007669"/>
    <property type="project" value="UniProtKB-UniRule"/>
</dbReference>
<dbReference type="GO" id="GO:0039660">
    <property type="term" value="F:structural constituent of virion"/>
    <property type="evidence" value="ECO:0007669"/>
    <property type="project" value="UniProtKB-UniRule"/>
</dbReference>
<dbReference type="GO" id="GO:0046761">
    <property type="term" value="P:viral budding from plasma membrane"/>
    <property type="evidence" value="ECO:0007669"/>
    <property type="project" value="UniProtKB-UniRule"/>
</dbReference>
<dbReference type="FunFam" id="1.10.10.180:FF:000001">
    <property type="entry name" value="Matrix protein 1"/>
    <property type="match status" value="1"/>
</dbReference>
<dbReference type="FunFam" id="1.20.91.10:FF:000001">
    <property type="entry name" value="Matrix protein 1"/>
    <property type="match status" value="1"/>
</dbReference>
<dbReference type="Gene3D" id="1.10.10.180">
    <property type="match status" value="1"/>
</dbReference>
<dbReference type="Gene3D" id="1.20.91.10">
    <property type="match status" value="1"/>
</dbReference>
<dbReference type="HAMAP" id="MF_04068">
    <property type="entry name" value="INFV_M1"/>
    <property type="match status" value="1"/>
</dbReference>
<dbReference type="InterPro" id="IPR036039">
    <property type="entry name" value="Flu_matrix_M1"/>
</dbReference>
<dbReference type="InterPro" id="IPR013188">
    <property type="entry name" value="Flu_matrix_M1_C"/>
</dbReference>
<dbReference type="InterPro" id="IPR001561">
    <property type="entry name" value="Flu_matrix_M1_N"/>
</dbReference>
<dbReference type="InterPro" id="IPR015423">
    <property type="entry name" value="Flu_matrix_M1_N_sub1"/>
</dbReference>
<dbReference type="InterPro" id="IPR015799">
    <property type="entry name" value="Flu_matrix_M1_N_sub2"/>
</dbReference>
<dbReference type="InterPro" id="IPR037533">
    <property type="entry name" value="INFV_M1"/>
</dbReference>
<dbReference type="Pfam" id="PF00598">
    <property type="entry name" value="Flu_M1"/>
    <property type="match status" value="1"/>
</dbReference>
<dbReference type="Pfam" id="PF08289">
    <property type="entry name" value="Flu_M1_C"/>
    <property type="match status" value="1"/>
</dbReference>
<dbReference type="SMART" id="SM00759">
    <property type="entry name" value="Flu_M1_C"/>
    <property type="match status" value="1"/>
</dbReference>
<dbReference type="SUPFAM" id="SSF48145">
    <property type="entry name" value="Influenza virus matrix protein M1"/>
    <property type="match status" value="1"/>
</dbReference>
<organism>
    <name type="scientific">Influenza A virus (strain A/Chicken/Hong Kong/FY150/2001 H5N1 genotype D)</name>
    <dbReference type="NCBI Taxonomy" id="222142"/>
    <lineage>
        <taxon>Viruses</taxon>
        <taxon>Riboviria</taxon>
        <taxon>Orthornavirae</taxon>
        <taxon>Negarnaviricota</taxon>
        <taxon>Polyploviricotina</taxon>
        <taxon>Insthoviricetes</taxon>
        <taxon>Articulavirales</taxon>
        <taxon>Orthomyxoviridae</taxon>
        <taxon>Alphainfluenzavirus</taxon>
        <taxon>Alphainfluenzavirus influenzae</taxon>
        <taxon>Influenza A virus</taxon>
    </lineage>
</organism>
<organismHost>
    <name type="scientific">Aves</name>
    <dbReference type="NCBI Taxonomy" id="8782"/>
</organismHost>
<organismHost>
    <name type="scientific">Felis catus</name>
    <name type="common">Cat</name>
    <name type="synonym">Felis silvestris catus</name>
    <dbReference type="NCBI Taxonomy" id="9685"/>
</organismHost>
<organismHost>
    <name type="scientific">Homo sapiens</name>
    <name type="common">Human</name>
    <dbReference type="NCBI Taxonomy" id="9606"/>
</organismHost>
<organismHost>
    <name type="scientific">Panthera pardus</name>
    <name type="common">Leopard</name>
    <name type="synonym">Felis pardus</name>
    <dbReference type="NCBI Taxonomy" id="9691"/>
</organismHost>
<organismHost>
    <name type="scientific">Panthera tigris</name>
    <name type="common">Tiger</name>
    <dbReference type="NCBI Taxonomy" id="9694"/>
</organismHost>
<organismHost>
    <name type="scientific">Sus scrofa</name>
    <name type="common">Pig</name>
    <dbReference type="NCBI Taxonomy" id="9823"/>
</organismHost>
<feature type="chain" id="PRO_0000311609" description="Matrix protein 1">
    <location>
        <begin position="1"/>
        <end position="252"/>
    </location>
</feature>
<feature type="region of interest" description="Membrane-binding" evidence="1">
    <location>
        <begin position="1"/>
        <end position="164"/>
    </location>
</feature>
<feature type="region of interest" description="RNP-binding" evidence="1">
    <location>
        <begin position="165"/>
        <end position="252"/>
    </location>
</feature>
<feature type="short sequence motif" description="Nuclear localization signal" evidence="1">
    <location>
        <begin position="101"/>
        <end position="105"/>
    </location>
</feature>
<reference key="1">
    <citation type="journal article" date="2002" name="Proc. Natl. Acad. Sci. U.S.A.">
        <title>Emergence of multiple genotypes of H5N1 avian influenza viruses in Hong Kong SAR.</title>
        <authorList>
            <person name="Guan Y."/>
            <person name="Peiris J.S.M."/>
            <person name="Lipatov A.S."/>
            <person name="Ellis T.M."/>
            <person name="Dyrting K.C."/>
            <person name="Krauss S."/>
            <person name="Zhang L.J."/>
            <person name="Webster R.G."/>
            <person name="Shortridge K.F."/>
        </authorList>
    </citation>
    <scope>NUCLEOTIDE SEQUENCE [GENOMIC RNA]</scope>
</reference>
<name>M1_I01A2</name>
<evidence type="ECO:0000255" key="1">
    <source>
        <dbReference type="HAMAP-Rule" id="MF_04068"/>
    </source>
</evidence>
<keyword id="KW-0025">Alternative splicing</keyword>
<keyword id="KW-1048">Host nucleus</keyword>
<keyword id="KW-0472">Membrane</keyword>
<keyword id="KW-0694">RNA-binding</keyword>
<keyword id="KW-0468">Viral matrix protein</keyword>
<keyword id="KW-0946">Virion</keyword>
<protein>
    <recommendedName>
        <fullName evidence="1">Matrix protein 1</fullName>
        <shortName evidence="1">M1</shortName>
    </recommendedName>
</protein>